<gene>
    <name evidence="1" type="primary">leuS</name>
    <name type="ordered locus">Ajs_3917</name>
</gene>
<dbReference type="EC" id="6.1.1.4" evidence="1"/>
<dbReference type="EMBL" id="CP000539">
    <property type="protein sequence ID" value="ABM44023.1"/>
    <property type="molecule type" value="Genomic_DNA"/>
</dbReference>
<dbReference type="SMR" id="A1WCP8"/>
<dbReference type="STRING" id="232721.Ajs_3917"/>
<dbReference type="KEGG" id="ajs:Ajs_3917"/>
<dbReference type="eggNOG" id="COG0495">
    <property type="taxonomic scope" value="Bacteria"/>
</dbReference>
<dbReference type="HOGENOM" id="CLU_004427_0_0_4"/>
<dbReference type="Proteomes" id="UP000000645">
    <property type="component" value="Chromosome"/>
</dbReference>
<dbReference type="GO" id="GO:0005829">
    <property type="term" value="C:cytosol"/>
    <property type="evidence" value="ECO:0007669"/>
    <property type="project" value="TreeGrafter"/>
</dbReference>
<dbReference type="GO" id="GO:0002161">
    <property type="term" value="F:aminoacyl-tRNA deacylase activity"/>
    <property type="evidence" value="ECO:0007669"/>
    <property type="project" value="InterPro"/>
</dbReference>
<dbReference type="GO" id="GO:0005524">
    <property type="term" value="F:ATP binding"/>
    <property type="evidence" value="ECO:0007669"/>
    <property type="project" value="UniProtKB-UniRule"/>
</dbReference>
<dbReference type="GO" id="GO:0004823">
    <property type="term" value="F:leucine-tRNA ligase activity"/>
    <property type="evidence" value="ECO:0007669"/>
    <property type="project" value="UniProtKB-UniRule"/>
</dbReference>
<dbReference type="GO" id="GO:0006429">
    <property type="term" value="P:leucyl-tRNA aminoacylation"/>
    <property type="evidence" value="ECO:0007669"/>
    <property type="project" value="UniProtKB-UniRule"/>
</dbReference>
<dbReference type="CDD" id="cd07958">
    <property type="entry name" value="Anticodon_Ia_Leu_BEm"/>
    <property type="match status" value="1"/>
</dbReference>
<dbReference type="CDD" id="cd00812">
    <property type="entry name" value="LeuRS_core"/>
    <property type="match status" value="1"/>
</dbReference>
<dbReference type="FunFam" id="1.10.730.10:FF:000003">
    <property type="entry name" value="Leucine--tRNA ligase"/>
    <property type="match status" value="1"/>
</dbReference>
<dbReference type="FunFam" id="3.10.20.590:FF:000001">
    <property type="entry name" value="Leucine--tRNA ligase"/>
    <property type="match status" value="1"/>
</dbReference>
<dbReference type="FunFam" id="3.40.50.620:FF:000003">
    <property type="entry name" value="Leucine--tRNA ligase"/>
    <property type="match status" value="1"/>
</dbReference>
<dbReference type="FunFam" id="3.40.50.620:FF:000056">
    <property type="entry name" value="Leucine--tRNA ligase"/>
    <property type="match status" value="1"/>
</dbReference>
<dbReference type="Gene3D" id="2.20.28.290">
    <property type="match status" value="1"/>
</dbReference>
<dbReference type="Gene3D" id="3.10.20.590">
    <property type="match status" value="1"/>
</dbReference>
<dbReference type="Gene3D" id="3.40.50.620">
    <property type="entry name" value="HUPs"/>
    <property type="match status" value="2"/>
</dbReference>
<dbReference type="Gene3D" id="1.10.730.10">
    <property type="entry name" value="Isoleucyl-tRNA Synthetase, Domain 1"/>
    <property type="match status" value="1"/>
</dbReference>
<dbReference type="HAMAP" id="MF_00049_B">
    <property type="entry name" value="Leu_tRNA_synth_B"/>
    <property type="match status" value="1"/>
</dbReference>
<dbReference type="InterPro" id="IPR001412">
    <property type="entry name" value="aa-tRNA-synth_I_CS"/>
</dbReference>
<dbReference type="InterPro" id="IPR002300">
    <property type="entry name" value="aa-tRNA-synth_Ia"/>
</dbReference>
<dbReference type="InterPro" id="IPR002302">
    <property type="entry name" value="Leu-tRNA-ligase"/>
</dbReference>
<dbReference type="InterPro" id="IPR025709">
    <property type="entry name" value="Leu_tRNA-synth_edit"/>
</dbReference>
<dbReference type="InterPro" id="IPR013155">
    <property type="entry name" value="M/V/L/I-tRNA-synth_anticd-bd"/>
</dbReference>
<dbReference type="InterPro" id="IPR014729">
    <property type="entry name" value="Rossmann-like_a/b/a_fold"/>
</dbReference>
<dbReference type="InterPro" id="IPR009080">
    <property type="entry name" value="tRNAsynth_Ia_anticodon-bd"/>
</dbReference>
<dbReference type="InterPro" id="IPR009008">
    <property type="entry name" value="Val/Leu/Ile-tRNA-synth_edit"/>
</dbReference>
<dbReference type="NCBIfam" id="TIGR00396">
    <property type="entry name" value="leuS_bact"/>
    <property type="match status" value="1"/>
</dbReference>
<dbReference type="PANTHER" id="PTHR43740:SF2">
    <property type="entry name" value="LEUCINE--TRNA LIGASE, MITOCHONDRIAL"/>
    <property type="match status" value="1"/>
</dbReference>
<dbReference type="PANTHER" id="PTHR43740">
    <property type="entry name" value="LEUCYL-TRNA SYNTHETASE"/>
    <property type="match status" value="1"/>
</dbReference>
<dbReference type="Pfam" id="PF08264">
    <property type="entry name" value="Anticodon_1"/>
    <property type="match status" value="1"/>
</dbReference>
<dbReference type="Pfam" id="PF00133">
    <property type="entry name" value="tRNA-synt_1"/>
    <property type="match status" value="3"/>
</dbReference>
<dbReference type="Pfam" id="PF13603">
    <property type="entry name" value="tRNA-synt_1_2"/>
    <property type="match status" value="1"/>
</dbReference>
<dbReference type="PRINTS" id="PR00985">
    <property type="entry name" value="TRNASYNTHLEU"/>
</dbReference>
<dbReference type="SUPFAM" id="SSF47323">
    <property type="entry name" value="Anticodon-binding domain of a subclass of class I aminoacyl-tRNA synthetases"/>
    <property type="match status" value="1"/>
</dbReference>
<dbReference type="SUPFAM" id="SSF52374">
    <property type="entry name" value="Nucleotidylyl transferase"/>
    <property type="match status" value="1"/>
</dbReference>
<dbReference type="SUPFAM" id="SSF50677">
    <property type="entry name" value="ValRS/IleRS/LeuRS editing domain"/>
    <property type="match status" value="1"/>
</dbReference>
<dbReference type="PROSITE" id="PS00178">
    <property type="entry name" value="AA_TRNA_LIGASE_I"/>
    <property type="match status" value="1"/>
</dbReference>
<name>SYL_ACISJ</name>
<comment type="catalytic activity">
    <reaction evidence="1">
        <text>tRNA(Leu) + L-leucine + ATP = L-leucyl-tRNA(Leu) + AMP + diphosphate</text>
        <dbReference type="Rhea" id="RHEA:11688"/>
        <dbReference type="Rhea" id="RHEA-COMP:9613"/>
        <dbReference type="Rhea" id="RHEA-COMP:9622"/>
        <dbReference type="ChEBI" id="CHEBI:30616"/>
        <dbReference type="ChEBI" id="CHEBI:33019"/>
        <dbReference type="ChEBI" id="CHEBI:57427"/>
        <dbReference type="ChEBI" id="CHEBI:78442"/>
        <dbReference type="ChEBI" id="CHEBI:78494"/>
        <dbReference type="ChEBI" id="CHEBI:456215"/>
        <dbReference type="EC" id="6.1.1.4"/>
    </reaction>
</comment>
<comment type="subcellular location">
    <subcellularLocation>
        <location evidence="1">Cytoplasm</location>
    </subcellularLocation>
</comment>
<comment type="similarity">
    <text evidence="1">Belongs to the class-I aminoacyl-tRNA synthetase family.</text>
</comment>
<reference key="1">
    <citation type="submission" date="2006-12" db="EMBL/GenBank/DDBJ databases">
        <title>Complete sequence of chromosome 1 of Acidovorax sp. JS42.</title>
        <authorList>
            <person name="Copeland A."/>
            <person name="Lucas S."/>
            <person name="Lapidus A."/>
            <person name="Barry K."/>
            <person name="Detter J.C."/>
            <person name="Glavina del Rio T."/>
            <person name="Dalin E."/>
            <person name="Tice H."/>
            <person name="Pitluck S."/>
            <person name="Chertkov O."/>
            <person name="Brettin T."/>
            <person name="Bruce D."/>
            <person name="Han C."/>
            <person name="Tapia R."/>
            <person name="Gilna P."/>
            <person name="Schmutz J."/>
            <person name="Larimer F."/>
            <person name="Land M."/>
            <person name="Hauser L."/>
            <person name="Kyrpides N."/>
            <person name="Kim E."/>
            <person name="Stahl D."/>
            <person name="Richardson P."/>
        </authorList>
    </citation>
    <scope>NUCLEOTIDE SEQUENCE [LARGE SCALE GENOMIC DNA]</scope>
    <source>
        <strain>JS42</strain>
    </source>
</reference>
<organism>
    <name type="scientific">Acidovorax sp. (strain JS42)</name>
    <dbReference type="NCBI Taxonomy" id="232721"/>
    <lineage>
        <taxon>Bacteria</taxon>
        <taxon>Pseudomonadati</taxon>
        <taxon>Pseudomonadota</taxon>
        <taxon>Betaproteobacteria</taxon>
        <taxon>Burkholderiales</taxon>
        <taxon>Comamonadaceae</taxon>
        <taxon>Acidovorax</taxon>
    </lineage>
</organism>
<feature type="chain" id="PRO_1000009285" description="Leucine--tRNA ligase">
    <location>
        <begin position="1"/>
        <end position="910"/>
    </location>
</feature>
<feature type="short sequence motif" description="'HIGH' region">
    <location>
        <begin position="42"/>
        <end position="52"/>
    </location>
</feature>
<feature type="short sequence motif" description="'KMSKS' region">
    <location>
        <begin position="658"/>
        <end position="662"/>
    </location>
</feature>
<feature type="binding site" evidence="1">
    <location>
        <position position="661"/>
    </location>
    <ligand>
        <name>ATP</name>
        <dbReference type="ChEBI" id="CHEBI:30616"/>
    </ligand>
</feature>
<evidence type="ECO:0000255" key="1">
    <source>
        <dbReference type="HAMAP-Rule" id="MF_00049"/>
    </source>
</evidence>
<proteinExistence type="inferred from homology"/>
<keyword id="KW-0030">Aminoacyl-tRNA synthetase</keyword>
<keyword id="KW-0067">ATP-binding</keyword>
<keyword id="KW-0963">Cytoplasm</keyword>
<keyword id="KW-0436">Ligase</keyword>
<keyword id="KW-0547">Nucleotide-binding</keyword>
<keyword id="KW-0648">Protein biosynthesis</keyword>
<protein>
    <recommendedName>
        <fullName evidence="1">Leucine--tRNA ligase</fullName>
        <ecNumber evidence="1">6.1.1.4</ecNumber>
    </recommendedName>
    <alternativeName>
        <fullName evidence="1">Leucyl-tRNA synthetase</fullName>
        <shortName evidence="1">LeuRS</shortName>
    </alternativeName>
</protein>
<sequence length="910" mass="101205">MQDKYNHTEVERAAHAHWNANDAYRVTEDQAKPKFYACSMLPYPSGKLHMGHVRNYTINDMLTRSLRMKGHNVLMPMGWDAFGLPAENAALKNGVPPAQWTYDNIAYMKKQMQAMGLAIDWSREIATCDPDYYKWNQWLFLKMLDKGIAYRKTQVVNWDPVDQTVLANEQVIDGRGWRTGALVEKREIPGYYLKITDYAQELLDHVQIGNEKATLTGWPDKVRLMQENWIGKSAGVRFAFPHDIRNAAGERIQDGKLYVFTTRADTIMGVTFCAVAPEHPLAQHAAASNAALAAFIEECKKGGTTEAELALKEKEGMPTGLFVTHPLTGEQVEVWVGNYVLMSYGDGAVMGVPAHDERDFAFALKYQLPIKQVVLVDGETFDFHQWQDWYGDKERGVTINSGNFSGLSYQDAVAAVAHALAEKGLGELKTTWRLRDWGISRQRYWGTPIPIIHCESCGAVPVPEKDLPVVLPQDLVPDGSGNPLAKCEAFLKVDCPCCGKPARRETDTMDTFVDSSWYFMRYCDPKNRDAMVAGGTDYWMRDQKAATGGSGMDQYIGGIEHAILHLLYARFWTKVMRDLGLVKVDEPFTKLLTQGMVLNHIYSRRTAKGAKDYFWPHDVEHVYDEAGKIVGAKLKNPAESGDGLLPVGTPIDYEGVGTMSKSKNNGVDPQQLIEKYGADTARLYTMFTAPPELTLEWNDAAVEGSYRFLRRVWNFGVKLSAIDKDAALASVAGAASLKDVQFGKEAKALRLEIHTVLKQVDYDYQRMQYNTVVSGAMKMINALEDFKATDSAGAQVALIEGFGILLRVLYPATPHIAHVLWDELGYAGTLGDLLDAAWPQVAPDALVQDELELMLQVNGKLRGAIRVAASADKAAIEQAALASEDFHKFAEGKAPKKVIIVPGRLVNVVV</sequence>
<accession>A1WCP8</accession>